<comment type="subunit">
    <text>Monomer.</text>
</comment>
<comment type="similarity">
    <text evidence="2">Belongs to the aldo/keto reductase family.</text>
</comment>
<comment type="caution">
    <text evidence="2">Was originally called epsilon crystallin.</text>
</comment>
<feature type="initiator methionine" description="Removed" evidence="1">
    <location>
        <position position="1"/>
    </location>
</feature>
<feature type="chain" id="PRO_0000124614" description="Rho crystallin">
    <location>
        <begin position="2"/>
        <end position="324"/>
    </location>
</feature>
<feature type="binding site" evidence="1">
    <location>
        <begin position="218"/>
        <end position="281"/>
    </location>
    <ligand>
        <name>NADP(+)</name>
        <dbReference type="ChEBI" id="CHEBI:58349"/>
    </ligand>
</feature>
<feature type="modified residue" description="N-acetylthreonine" evidence="1">
    <location>
        <position position="2"/>
    </location>
</feature>
<accession>P02532</accession>
<evidence type="ECO:0000250" key="1"/>
<evidence type="ECO:0000305" key="2"/>
<sequence>MTLTKETRVTLNDGNMMPILGLGTYASPHVPKSLAEEAVKIAIDVGYRHIDCAFITGNEMHIGNGIRSKISDGTVKREDIFYTGKLWCTYFSPEMVRKGLERSLRDVGMDYLDLFLMHWPVSLKPSGASDPSDKDKPFIYDNVDLCATWEALEARKDAGLVRSLGVSNFNRRQLERILNKPGLKYKPVCNQVECHVYLNQNKLHSYCKSKDIVLVTYSVLGSHRDRNWVDLSLPVLLDDPILNKVAAKYNRTSAEIAMRFILQKGIVVLAKSFTPARIKQNLGVFEFELKPEDMKSLESLDRNLHYGPFREVKQHPEYPFHDEY</sequence>
<organism>
    <name type="scientific">Rana temporaria</name>
    <name type="common">European common frog</name>
    <dbReference type="NCBI Taxonomy" id="8407"/>
    <lineage>
        <taxon>Eukaryota</taxon>
        <taxon>Metazoa</taxon>
        <taxon>Chordata</taxon>
        <taxon>Craniata</taxon>
        <taxon>Vertebrata</taxon>
        <taxon>Euteleostomi</taxon>
        <taxon>Amphibia</taxon>
        <taxon>Batrachia</taxon>
        <taxon>Anura</taxon>
        <taxon>Neobatrachia</taxon>
        <taxon>Ranoidea</taxon>
        <taxon>Ranidae</taxon>
        <taxon>Rana</taxon>
        <taxon>Rana</taxon>
    </lineage>
</organism>
<name>CRO_RANTE</name>
<keyword id="KW-0007">Acetylation</keyword>
<keyword id="KW-0273">Eye lens protein</keyword>
<reference key="1">
    <citation type="journal article" date="1994" name="Dokl. Akad. Nauk">
        <title>Rho-crystallins from frog eye lens: structure and expression.</title>
        <authorList>
            <person name="Dolgilevich S.M."/>
            <person name="Mikaelian A.S."/>
            <person name="Kniazeva M.V."/>
            <person name="Snegovaia I.Y."/>
            <person name="Simirskii V.N."/>
            <person name="Aleinikova K.S."/>
            <person name="Gause G.G. Jr."/>
        </authorList>
    </citation>
    <scope>NUCLEOTIDE SEQUENCE [MRNA]</scope>
    <source>
        <tissue>Lens</tissue>
    </source>
</reference>
<reference key="2">
    <citation type="journal article" date="1984" name="FEBS Lett.">
        <title>A novel type of crystallin in the frog eye lens. 35-kDa polypeptide is not homologous to any of the major classes of lens crystallins.</title>
        <authorList>
            <person name="Tomarev S.I."/>
            <person name="Zinovieva R.D."/>
            <person name="Dolgilevich S.M."/>
            <person name="Luchin S.V."/>
            <person name="Krayev A.S."/>
            <person name="Skryabin K.G."/>
            <person name="Gause G.G. Jr."/>
        </authorList>
    </citation>
    <scope>NUCLEOTIDE SEQUENCE [MRNA] OF 100-324</scope>
    <source>
        <tissue>Lens</tissue>
    </source>
</reference>
<dbReference type="EMBL" id="S70451">
    <property type="protein sequence ID" value="AAB30820.1"/>
    <property type="molecule type" value="mRNA"/>
</dbReference>
<dbReference type="EMBL" id="X00659">
    <property type="protein sequence ID" value="CAA25277.1"/>
    <property type="status" value="ALT_SEQ"/>
    <property type="molecule type" value="mRNA"/>
</dbReference>
<dbReference type="PIR" id="A02938">
    <property type="entry name" value="CYFGE"/>
</dbReference>
<dbReference type="SMR" id="P02532"/>
<dbReference type="GO" id="GO:0016491">
    <property type="term" value="F:oxidoreductase activity"/>
    <property type="evidence" value="ECO:0007669"/>
    <property type="project" value="InterPro"/>
</dbReference>
<dbReference type="GO" id="GO:0005212">
    <property type="term" value="F:structural constituent of eye lens"/>
    <property type="evidence" value="ECO:0007669"/>
    <property type="project" value="UniProtKB-KW"/>
</dbReference>
<dbReference type="CDD" id="cd19108">
    <property type="entry name" value="AKR_AKR1C1-35"/>
    <property type="match status" value="1"/>
</dbReference>
<dbReference type="FunFam" id="3.20.20.100:FF:000003">
    <property type="entry name" value="Aldo-keto reductase family 1 member C3"/>
    <property type="match status" value="1"/>
</dbReference>
<dbReference type="Gene3D" id="3.20.20.100">
    <property type="entry name" value="NADP-dependent oxidoreductase domain"/>
    <property type="match status" value="1"/>
</dbReference>
<dbReference type="InterPro" id="IPR020471">
    <property type="entry name" value="AKR"/>
</dbReference>
<dbReference type="InterPro" id="IPR044482">
    <property type="entry name" value="AKR1C"/>
</dbReference>
<dbReference type="InterPro" id="IPR018170">
    <property type="entry name" value="Aldo/ket_reductase_CS"/>
</dbReference>
<dbReference type="InterPro" id="IPR023210">
    <property type="entry name" value="NADP_OxRdtase_dom"/>
</dbReference>
<dbReference type="InterPro" id="IPR036812">
    <property type="entry name" value="NADP_OxRdtase_dom_sf"/>
</dbReference>
<dbReference type="PANTHER" id="PTHR11732">
    <property type="entry name" value="ALDO/KETO REDUCTASE"/>
    <property type="match status" value="1"/>
</dbReference>
<dbReference type="Pfam" id="PF00248">
    <property type="entry name" value="Aldo_ket_red"/>
    <property type="match status" value="1"/>
</dbReference>
<dbReference type="PIRSF" id="PIRSF000097">
    <property type="entry name" value="AKR"/>
    <property type="match status" value="1"/>
</dbReference>
<dbReference type="PRINTS" id="PR00069">
    <property type="entry name" value="ALDKETRDTASE"/>
</dbReference>
<dbReference type="SUPFAM" id="SSF51430">
    <property type="entry name" value="NAD(P)-linked oxidoreductase"/>
    <property type="match status" value="1"/>
</dbReference>
<dbReference type="PROSITE" id="PS00798">
    <property type="entry name" value="ALDOKETO_REDUCTASE_1"/>
    <property type="match status" value="1"/>
</dbReference>
<dbReference type="PROSITE" id="PS00062">
    <property type="entry name" value="ALDOKETO_REDUCTASE_2"/>
    <property type="match status" value="1"/>
</dbReference>
<dbReference type="PROSITE" id="PS00063">
    <property type="entry name" value="ALDOKETO_REDUCTASE_3"/>
    <property type="match status" value="1"/>
</dbReference>
<proteinExistence type="evidence at transcript level"/>
<protein>
    <recommendedName>
        <fullName>Rho crystallin</fullName>
    </recommendedName>
</protein>